<evidence type="ECO:0000255" key="1">
    <source>
        <dbReference type="HAMAP-Rule" id="MF_00564"/>
    </source>
</evidence>
<protein>
    <recommendedName>
        <fullName evidence="1">Ribonuclease PH</fullName>
        <shortName evidence="1">RNase PH</shortName>
        <ecNumber evidence="1">2.7.7.56</ecNumber>
    </recommendedName>
    <alternativeName>
        <fullName evidence="1">tRNA nucleotidyltransferase</fullName>
    </alternativeName>
</protein>
<reference key="1">
    <citation type="journal article" date="2001" name="Nature">
        <title>Complete genome sequence of a multiple drug resistant Salmonella enterica serovar Typhi CT18.</title>
        <authorList>
            <person name="Parkhill J."/>
            <person name="Dougan G."/>
            <person name="James K.D."/>
            <person name="Thomson N.R."/>
            <person name="Pickard D."/>
            <person name="Wain J."/>
            <person name="Churcher C.M."/>
            <person name="Mungall K.L."/>
            <person name="Bentley S.D."/>
            <person name="Holden M.T.G."/>
            <person name="Sebaihia M."/>
            <person name="Baker S."/>
            <person name="Basham D."/>
            <person name="Brooks K."/>
            <person name="Chillingworth T."/>
            <person name="Connerton P."/>
            <person name="Cronin A."/>
            <person name="Davis P."/>
            <person name="Davies R.M."/>
            <person name="Dowd L."/>
            <person name="White N."/>
            <person name="Farrar J."/>
            <person name="Feltwell T."/>
            <person name="Hamlin N."/>
            <person name="Haque A."/>
            <person name="Hien T.T."/>
            <person name="Holroyd S."/>
            <person name="Jagels K."/>
            <person name="Krogh A."/>
            <person name="Larsen T.S."/>
            <person name="Leather S."/>
            <person name="Moule S."/>
            <person name="O'Gaora P."/>
            <person name="Parry C."/>
            <person name="Quail M.A."/>
            <person name="Rutherford K.M."/>
            <person name="Simmonds M."/>
            <person name="Skelton J."/>
            <person name="Stevens K."/>
            <person name="Whitehead S."/>
            <person name="Barrell B.G."/>
        </authorList>
    </citation>
    <scope>NUCLEOTIDE SEQUENCE [LARGE SCALE GENOMIC DNA]</scope>
    <source>
        <strain>CT18</strain>
    </source>
</reference>
<reference key="2">
    <citation type="journal article" date="2003" name="J. Bacteriol.">
        <title>Comparative genomics of Salmonella enterica serovar Typhi strains Ty2 and CT18.</title>
        <authorList>
            <person name="Deng W."/>
            <person name="Liou S.-R."/>
            <person name="Plunkett G. III"/>
            <person name="Mayhew G.F."/>
            <person name="Rose D.J."/>
            <person name="Burland V."/>
            <person name="Kodoyianni V."/>
            <person name="Schwartz D.C."/>
            <person name="Blattner F.R."/>
        </authorList>
    </citation>
    <scope>NUCLEOTIDE SEQUENCE [LARGE SCALE GENOMIC DNA]</scope>
    <source>
        <strain>ATCC 700931 / Ty2</strain>
    </source>
</reference>
<dbReference type="EC" id="2.7.7.56" evidence="1"/>
<dbReference type="EMBL" id="AL513382">
    <property type="protein sequence ID" value="CAD03259.1"/>
    <property type="molecule type" value="Genomic_DNA"/>
</dbReference>
<dbReference type="EMBL" id="AE014613">
    <property type="protein sequence ID" value="AAO71266.1"/>
    <property type="molecule type" value="Genomic_DNA"/>
</dbReference>
<dbReference type="RefSeq" id="NP_458192.1">
    <property type="nucleotide sequence ID" value="NC_003198.1"/>
</dbReference>
<dbReference type="RefSeq" id="WP_001247078.1">
    <property type="nucleotide sequence ID" value="NZ_WSUR01000001.1"/>
</dbReference>
<dbReference type="SMR" id="P0A2C4"/>
<dbReference type="STRING" id="220341.gene:17587903"/>
<dbReference type="KEGG" id="stt:t3784"/>
<dbReference type="KEGG" id="sty:STY4060"/>
<dbReference type="PATRIC" id="fig|220341.7.peg.4145"/>
<dbReference type="eggNOG" id="COG0689">
    <property type="taxonomic scope" value="Bacteria"/>
</dbReference>
<dbReference type="HOGENOM" id="CLU_050858_0_0_6"/>
<dbReference type="OMA" id="RYNMAPF"/>
<dbReference type="OrthoDB" id="9802265at2"/>
<dbReference type="Proteomes" id="UP000000541">
    <property type="component" value="Chromosome"/>
</dbReference>
<dbReference type="Proteomes" id="UP000002670">
    <property type="component" value="Chromosome"/>
</dbReference>
<dbReference type="GO" id="GO:0000175">
    <property type="term" value="F:3'-5'-RNA exonuclease activity"/>
    <property type="evidence" value="ECO:0007669"/>
    <property type="project" value="UniProtKB-UniRule"/>
</dbReference>
<dbReference type="GO" id="GO:0000049">
    <property type="term" value="F:tRNA binding"/>
    <property type="evidence" value="ECO:0007669"/>
    <property type="project" value="UniProtKB-UniRule"/>
</dbReference>
<dbReference type="GO" id="GO:0009022">
    <property type="term" value="F:tRNA nucleotidyltransferase activity"/>
    <property type="evidence" value="ECO:0007669"/>
    <property type="project" value="UniProtKB-UniRule"/>
</dbReference>
<dbReference type="GO" id="GO:0016075">
    <property type="term" value="P:rRNA catabolic process"/>
    <property type="evidence" value="ECO:0007669"/>
    <property type="project" value="UniProtKB-UniRule"/>
</dbReference>
<dbReference type="GO" id="GO:0006364">
    <property type="term" value="P:rRNA processing"/>
    <property type="evidence" value="ECO:0007669"/>
    <property type="project" value="UniProtKB-KW"/>
</dbReference>
<dbReference type="GO" id="GO:0008033">
    <property type="term" value="P:tRNA processing"/>
    <property type="evidence" value="ECO:0007669"/>
    <property type="project" value="UniProtKB-UniRule"/>
</dbReference>
<dbReference type="CDD" id="cd11362">
    <property type="entry name" value="RNase_PH_bact"/>
    <property type="match status" value="1"/>
</dbReference>
<dbReference type="FunFam" id="3.30.230.70:FF:000003">
    <property type="entry name" value="Ribonuclease PH"/>
    <property type="match status" value="1"/>
</dbReference>
<dbReference type="Gene3D" id="3.30.230.70">
    <property type="entry name" value="GHMP Kinase, N-terminal domain"/>
    <property type="match status" value="1"/>
</dbReference>
<dbReference type="HAMAP" id="MF_00564">
    <property type="entry name" value="RNase_PH"/>
    <property type="match status" value="1"/>
</dbReference>
<dbReference type="InterPro" id="IPR001247">
    <property type="entry name" value="ExoRNase_PH_dom1"/>
</dbReference>
<dbReference type="InterPro" id="IPR015847">
    <property type="entry name" value="ExoRNase_PH_dom2"/>
</dbReference>
<dbReference type="InterPro" id="IPR036345">
    <property type="entry name" value="ExoRNase_PH_dom2_sf"/>
</dbReference>
<dbReference type="InterPro" id="IPR027408">
    <property type="entry name" value="PNPase/RNase_PH_dom_sf"/>
</dbReference>
<dbReference type="InterPro" id="IPR020568">
    <property type="entry name" value="Ribosomal_Su5_D2-typ_SF"/>
</dbReference>
<dbReference type="InterPro" id="IPR050080">
    <property type="entry name" value="RNase_PH"/>
</dbReference>
<dbReference type="InterPro" id="IPR002381">
    <property type="entry name" value="RNase_PH_bac-type"/>
</dbReference>
<dbReference type="InterPro" id="IPR018336">
    <property type="entry name" value="RNase_PH_CS"/>
</dbReference>
<dbReference type="NCBIfam" id="TIGR01966">
    <property type="entry name" value="RNasePH"/>
    <property type="match status" value="1"/>
</dbReference>
<dbReference type="PANTHER" id="PTHR11953">
    <property type="entry name" value="EXOSOME COMPLEX COMPONENT"/>
    <property type="match status" value="1"/>
</dbReference>
<dbReference type="PANTHER" id="PTHR11953:SF0">
    <property type="entry name" value="EXOSOME COMPLEX COMPONENT RRP41"/>
    <property type="match status" value="1"/>
</dbReference>
<dbReference type="Pfam" id="PF01138">
    <property type="entry name" value="RNase_PH"/>
    <property type="match status" value="1"/>
</dbReference>
<dbReference type="Pfam" id="PF03725">
    <property type="entry name" value="RNase_PH_C"/>
    <property type="match status" value="1"/>
</dbReference>
<dbReference type="SUPFAM" id="SSF55666">
    <property type="entry name" value="Ribonuclease PH domain 2-like"/>
    <property type="match status" value="1"/>
</dbReference>
<dbReference type="SUPFAM" id="SSF54211">
    <property type="entry name" value="Ribosomal protein S5 domain 2-like"/>
    <property type="match status" value="1"/>
</dbReference>
<dbReference type="PROSITE" id="PS01277">
    <property type="entry name" value="RIBONUCLEASE_PH"/>
    <property type="match status" value="1"/>
</dbReference>
<feature type="chain" id="PRO_0000139934" description="Ribonuclease PH">
    <location>
        <begin position="1"/>
        <end position="238"/>
    </location>
</feature>
<feature type="binding site" evidence="1">
    <location>
        <position position="86"/>
    </location>
    <ligand>
        <name>phosphate</name>
        <dbReference type="ChEBI" id="CHEBI:43474"/>
        <note>substrate</note>
    </ligand>
</feature>
<feature type="binding site" evidence="1">
    <location>
        <begin position="124"/>
        <end position="126"/>
    </location>
    <ligand>
        <name>phosphate</name>
        <dbReference type="ChEBI" id="CHEBI:43474"/>
        <note>substrate</note>
    </ligand>
</feature>
<comment type="function">
    <text evidence="1">Phosphorolytic 3'-5' exoribonuclease that plays an important role in tRNA 3'-end maturation. Removes nucleotide residues following the 3'-CCA terminus of tRNAs; can also add nucleotides to the ends of RNA molecules by using nucleoside diphosphates as substrates, but this may not be physiologically important. Probably plays a role in initiation of 16S rRNA degradation (leading to ribosome degradation) during starvation.</text>
</comment>
<comment type="catalytic activity">
    <reaction evidence="1">
        <text>tRNA(n+1) + phosphate = tRNA(n) + a ribonucleoside 5'-diphosphate</text>
        <dbReference type="Rhea" id="RHEA:10628"/>
        <dbReference type="Rhea" id="RHEA-COMP:17343"/>
        <dbReference type="Rhea" id="RHEA-COMP:17344"/>
        <dbReference type="ChEBI" id="CHEBI:43474"/>
        <dbReference type="ChEBI" id="CHEBI:57930"/>
        <dbReference type="ChEBI" id="CHEBI:173114"/>
        <dbReference type="EC" id="2.7.7.56"/>
    </reaction>
</comment>
<comment type="subunit">
    <text evidence="1">Homohexameric ring arranged as a trimer of dimers.</text>
</comment>
<comment type="similarity">
    <text evidence="1">Belongs to the RNase PH family.</text>
</comment>
<accession>P0A2C4</accession>
<accession>P26155</accession>
<sequence>MRPAGRSANQVRPVTLTRNYTKHAEGSVLVEFGDTKVLCTASIEEGVPRFLKGQGQGWITAEYGMLPRATHTRNAREAAKGKQGGRTMEIQRLIARALRAAVDLKTLGEFTITLDCDVIQADGGTRTASITGACVALADALNKLVANGKLKTNPMKGMVAAVSVGIVNGEAICDLEYVEDSAAETDMNVVMTEDGRIIEVQGTAEGEPFSHEELLTLLALARGGIESIVATQKAALEN</sequence>
<gene>
    <name evidence="1" type="primary">rph</name>
    <name type="ordered locus">STY4060</name>
    <name type="ordered locus">t3784</name>
</gene>
<keyword id="KW-0548">Nucleotidyltransferase</keyword>
<keyword id="KW-0694">RNA-binding</keyword>
<keyword id="KW-0698">rRNA processing</keyword>
<keyword id="KW-0808">Transferase</keyword>
<keyword id="KW-0819">tRNA processing</keyword>
<keyword id="KW-0820">tRNA-binding</keyword>
<name>RNPH_SALTI</name>
<proteinExistence type="inferred from homology"/>
<organism>
    <name type="scientific">Salmonella typhi</name>
    <dbReference type="NCBI Taxonomy" id="90370"/>
    <lineage>
        <taxon>Bacteria</taxon>
        <taxon>Pseudomonadati</taxon>
        <taxon>Pseudomonadota</taxon>
        <taxon>Gammaproteobacteria</taxon>
        <taxon>Enterobacterales</taxon>
        <taxon>Enterobacteriaceae</taxon>
        <taxon>Salmonella</taxon>
    </lineage>
</organism>